<reference key="1">
    <citation type="submission" date="2006-06" db="EMBL/GenBank/DDBJ databases">
        <title>Complete sequence of Pseudoalteromonas atlantica T6c.</title>
        <authorList>
            <consortium name="US DOE Joint Genome Institute"/>
            <person name="Copeland A."/>
            <person name="Lucas S."/>
            <person name="Lapidus A."/>
            <person name="Barry K."/>
            <person name="Detter J.C."/>
            <person name="Glavina del Rio T."/>
            <person name="Hammon N."/>
            <person name="Israni S."/>
            <person name="Dalin E."/>
            <person name="Tice H."/>
            <person name="Pitluck S."/>
            <person name="Saunders E."/>
            <person name="Brettin T."/>
            <person name="Bruce D."/>
            <person name="Han C."/>
            <person name="Tapia R."/>
            <person name="Gilna P."/>
            <person name="Schmutz J."/>
            <person name="Larimer F."/>
            <person name="Land M."/>
            <person name="Hauser L."/>
            <person name="Kyrpides N."/>
            <person name="Kim E."/>
            <person name="Karls A.C."/>
            <person name="Bartlett D."/>
            <person name="Higgins B.P."/>
            <person name="Richardson P."/>
        </authorList>
    </citation>
    <scope>NUCLEOTIDE SEQUENCE [LARGE SCALE GENOMIC DNA]</scope>
    <source>
        <strain>T6c / ATCC BAA-1087</strain>
    </source>
</reference>
<feature type="chain" id="PRO_1000058405" description="Methionyl-tRNA formyltransferase">
    <location>
        <begin position="1"/>
        <end position="315"/>
    </location>
</feature>
<feature type="binding site" evidence="1">
    <location>
        <begin position="113"/>
        <end position="116"/>
    </location>
    <ligand>
        <name>(6S)-5,6,7,8-tetrahydrofolate</name>
        <dbReference type="ChEBI" id="CHEBI:57453"/>
    </ligand>
</feature>
<comment type="function">
    <text evidence="1">Attaches a formyl group to the free amino group of methionyl-tRNA(fMet). The formyl group appears to play a dual role in the initiator identity of N-formylmethionyl-tRNA by promoting its recognition by IF2 and preventing the misappropriation of this tRNA by the elongation apparatus.</text>
</comment>
<comment type="catalytic activity">
    <reaction evidence="1">
        <text>L-methionyl-tRNA(fMet) + (6R)-10-formyltetrahydrofolate = N-formyl-L-methionyl-tRNA(fMet) + (6S)-5,6,7,8-tetrahydrofolate + H(+)</text>
        <dbReference type="Rhea" id="RHEA:24380"/>
        <dbReference type="Rhea" id="RHEA-COMP:9952"/>
        <dbReference type="Rhea" id="RHEA-COMP:9953"/>
        <dbReference type="ChEBI" id="CHEBI:15378"/>
        <dbReference type="ChEBI" id="CHEBI:57453"/>
        <dbReference type="ChEBI" id="CHEBI:78530"/>
        <dbReference type="ChEBI" id="CHEBI:78844"/>
        <dbReference type="ChEBI" id="CHEBI:195366"/>
        <dbReference type="EC" id="2.1.2.9"/>
    </reaction>
</comment>
<comment type="similarity">
    <text evidence="1">Belongs to the Fmt family.</text>
</comment>
<name>FMT_PSEA6</name>
<proteinExistence type="inferred from homology"/>
<dbReference type="EC" id="2.1.2.9" evidence="1"/>
<dbReference type="EMBL" id="CP000388">
    <property type="protein sequence ID" value="ABG38555.1"/>
    <property type="molecule type" value="Genomic_DNA"/>
</dbReference>
<dbReference type="RefSeq" id="WP_011572970.1">
    <property type="nucleotide sequence ID" value="NC_008228.1"/>
</dbReference>
<dbReference type="SMR" id="Q15ZY3"/>
<dbReference type="STRING" id="342610.Patl_0022"/>
<dbReference type="KEGG" id="pat:Patl_0022"/>
<dbReference type="eggNOG" id="COG0223">
    <property type="taxonomic scope" value="Bacteria"/>
</dbReference>
<dbReference type="HOGENOM" id="CLU_033347_1_2_6"/>
<dbReference type="OrthoDB" id="9802815at2"/>
<dbReference type="Proteomes" id="UP000001981">
    <property type="component" value="Chromosome"/>
</dbReference>
<dbReference type="GO" id="GO:0005829">
    <property type="term" value="C:cytosol"/>
    <property type="evidence" value="ECO:0007669"/>
    <property type="project" value="TreeGrafter"/>
</dbReference>
<dbReference type="GO" id="GO:0004479">
    <property type="term" value="F:methionyl-tRNA formyltransferase activity"/>
    <property type="evidence" value="ECO:0007669"/>
    <property type="project" value="UniProtKB-UniRule"/>
</dbReference>
<dbReference type="CDD" id="cd08646">
    <property type="entry name" value="FMT_core_Met-tRNA-FMT_N"/>
    <property type="match status" value="1"/>
</dbReference>
<dbReference type="CDD" id="cd08704">
    <property type="entry name" value="Met_tRNA_FMT_C"/>
    <property type="match status" value="1"/>
</dbReference>
<dbReference type="FunFam" id="3.40.50.170:FF:000003">
    <property type="entry name" value="Methionyl-tRNA formyltransferase"/>
    <property type="match status" value="1"/>
</dbReference>
<dbReference type="Gene3D" id="3.10.25.10">
    <property type="entry name" value="Formyl transferase, C-terminal domain"/>
    <property type="match status" value="1"/>
</dbReference>
<dbReference type="Gene3D" id="3.40.50.170">
    <property type="entry name" value="Formyl transferase, N-terminal domain"/>
    <property type="match status" value="1"/>
</dbReference>
<dbReference type="HAMAP" id="MF_00182">
    <property type="entry name" value="Formyl_trans"/>
    <property type="match status" value="1"/>
</dbReference>
<dbReference type="InterPro" id="IPR005794">
    <property type="entry name" value="Fmt"/>
</dbReference>
<dbReference type="InterPro" id="IPR005793">
    <property type="entry name" value="Formyl_trans_C"/>
</dbReference>
<dbReference type="InterPro" id="IPR037022">
    <property type="entry name" value="Formyl_trans_C_sf"/>
</dbReference>
<dbReference type="InterPro" id="IPR002376">
    <property type="entry name" value="Formyl_transf_N"/>
</dbReference>
<dbReference type="InterPro" id="IPR036477">
    <property type="entry name" value="Formyl_transf_N_sf"/>
</dbReference>
<dbReference type="InterPro" id="IPR011034">
    <property type="entry name" value="Formyl_transferase-like_C_sf"/>
</dbReference>
<dbReference type="InterPro" id="IPR001555">
    <property type="entry name" value="GART_AS"/>
</dbReference>
<dbReference type="InterPro" id="IPR044135">
    <property type="entry name" value="Met-tRNA-FMT_C"/>
</dbReference>
<dbReference type="InterPro" id="IPR041711">
    <property type="entry name" value="Met-tRNA-FMT_N"/>
</dbReference>
<dbReference type="NCBIfam" id="TIGR00460">
    <property type="entry name" value="fmt"/>
    <property type="match status" value="1"/>
</dbReference>
<dbReference type="PANTHER" id="PTHR11138">
    <property type="entry name" value="METHIONYL-TRNA FORMYLTRANSFERASE"/>
    <property type="match status" value="1"/>
</dbReference>
<dbReference type="PANTHER" id="PTHR11138:SF5">
    <property type="entry name" value="METHIONYL-TRNA FORMYLTRANSFERASE, MITOCHONDRIAL"/>
    <property type="match status" value="1"/>
</dbReference>
<dbReference type="Pfam" id="PF02911">
    <property type="entry name" value="Formyl_trans_C"/>
    <property type="match status" value="1"/>
</dbReference>
<dbReference type="Pfam" id="PF00551">
    <property type="entry name" value="Formyl_trans_N"/>
    <property type="match status" value="1"/>
</dbReference>
<dbReference type="SUPFAM" id="SSF50486">
    <property type="entry name" value="FMT C-terminal domain-like"/>
    <property type="match status" value="1"/>
</dbReference>
<dbReference type="SUPFAM" id="SSF53328">
    <property type="entry name" value="Formyltransferase"/>
    <property type="match status" value="1"/>
</dbReference>
<dbReference type="PROSITE" id="PS00373">
    <property type="entry name" value="GART"/>
    <property type="match status" value="1"/>
</dbReference>
<accession>Q15ZY3</accession>
<organism>
    <name type="scientific">Pseudoalteromonas atlantica (strain T6c / ATCC BAA-1087)</name>
    <dbReference type="NCBI Taxonomy" id="3042615"/>
    <lineage>
        <taxon>Bacteria</taxon>
        <taxon>Pseudomonadati</taxon>
        <taxon>Pseudomonadota</taxon>
        <taxon>Gammaproteobacteria</taxon>
        <taxon>Alteromonadales</taxon>
        <taxon>Alteromonadaceae</taxon>
        <taxon>Paraglaciecola</taxon>
    </lineage>
</organism>
<sequence>MKSGLKIVFAGTPEFAANHLSALIESEHQVIAAYTQPDRPAGRGKKLHASAVKQLAQQHDIPVYQPASLKSEEAQQQLAALNADVMVVVAYGLILPQIILDTPKYGCLNVHGSLLPKWRGAAPIQRAIWAGDAETGVTIMQMDKGLDTGAVLSELRLAITPIDTSATLYTKLAELGPKGLLETLASLGDLTPQAQDNTLATYAEKLSKQEAKIDWTMTAAQLERNVRAFDPWPVAYFEANGAAIKVRSAEVQQTPICDNAKPGQIIQADKHAIGVQTGDGVLLIKTLQLPGKKPLATQDILNGHSDWFSVGTILS</sequence>
<protein>
    <recommendedName>
        <fullName evidence="1">Methionyl-tRNA formyltransferase</fullName>
        <ecNumber evidence="1">2.1.2.9</ecNumber>
    </recommendedName>
</protein>
<keyword id="KW-0648">Protein biosynthesis</keyword>
<keyword id="KW-0808">Transferase</keyword>
<gene>
    <name evidence="1" type="primary">fmt</name>
    <name type="ordered locus">Patl_0022</name>
</gene>
<evidence type="ECO:0000255" key="1">
    <source>
        <dbReference type="HAMAP-Rule" id="MF_00182"/>
    </source>
</evidence>